<accession>P47176</accession>
<accession>D6VWW6</accession>
<accession>Q07124</accession>
<dbReference type="EC" id="2.6.1.42" evidence="15"/>
<dbReference type="EMBL" id="X86568">
    <property type="protein sequence ID" value="CAA60376.1"/>
    <property type="status" value="ALT_SEQ"/>
    <property type="molecule type" value="mRNA"/>
</dbReference>
<dbReference type="EMBL" id="Z49648">
    <property type="protein sequence ID" value="CAA89681.1"/>
    <property type="molecule type" value="Genomic_DNA"/>
</dbReference>
<dbReference type="EMBL" id="BK006943">
    <property type="protein sequence ID" value="DAA08932.1"/>
    <property type="molecule type" value="Genomic_DNA"/>
</dbReference>
<dbReference type="PIR" id="S57177">
    <property type="entry name" value="S57177"/>
</dbReference>
<dbReference type="RefSeq" id="NP_012682.1">
    <property type="nucleotide sequence ID" value="NM_001181806.1"/>
</dbReference>
<dbReference type="SMR" id="P47176"/>
<dbReference type="BioGRID" id="33903">
    <property type="interactions" value="196"/>
</dbReference>
<dbReference type="DIP" id="DIP-2151N"/>
<dbReference type="FunCoup" id="P47176">
    <property type="interactions" value="815"/>
</dbReference>
<dbReference type="IntAct" id="P47176">
    <property type="interactions" value="38"/>
</dbReference>
<dbReference type="MINT" id="P47176"/>
<dbReference type="STRING" id="4932.YJR148W"/>
<dbReference type="GlyGen" id="P47176">
    <property type="glycosylation" value="1 site, 1 O-linked glycan (1 site)"/>
</dbReference>
<dbReference type="iPTMnet" id="P47176"/>
<dbReference type="PaxDb" id="4932-YJR148W"/>
<dbReference type="PeptideAtlas" id="P47176"/>
<dbReference type="EnsemblFungi" id="YJR148W_mRNA">
    <property type="protein sequence ID" value="YJR148W"/>
    <property type="gene ID" value="YJR148W"/>
</dbReference>
<dbReference type="GeneID" id="853613"/>
<dbReference type="KEGG" id="sce:YJR148W"/>
<dbReference type="AGR" id="SGD:S000003909"/>
<dbReference type="SGD" id="S000003909">
    <property type="gene designation" value="BAT2"/>
</dbReference>
<dbReference type="VEuPathDB" id="FungiDB:YJR148W"/>
<dbReference type="eggNOG" id="KOG0975">
    <property type="taxonomic scope" value="Eukaryota"/>
</dbReference>
<dbReference type="GeneTree" id="ENSGT00390000009532"/>
<dbReference type="HOGENOM" id="CLU_031922_0_2_1"/>
<dbReference type="InParanoid" id="P47176"/>
<dbReference type="OMA" id="TDFRFIA"/>
<dbReference type="OrthoDB" id="1732691at2759"/>
<dbReference type="BioCyc" id="YEAST:YJR148W-MONOMER"/>
<dbReference type="BRENDA" id="2.6.1.42">
    <property type="organism ID" value="984"/>
</dbReference>
<dbReference type="Reactome" id="R-SCE-70895">
    <property type="pathway name" value="Branched-chain amino acid catabolism"/>
</dbReference>
<dbReference type="UniPathway" id="UPA00047">
    <property type="reaction ID" value="UER00058"/>
</dbReference>
<dbReference type="UniPathway" id="UPA00048">
    <property type="reaction ID" value="UER00073"/>
</dbReference>
<dbReference type="UniPathway" id="UPA00049">
    <property type="reaction ID" value="UER00062"/>
</dbReference>
<dbReference type="UniPathway" id="UPA00904">
    <property type="reaction ID" value="UER00879"/>
</dbReference>
<dbReference type="BioGRID-ORCS" id="853613">
    <property type="hits" value="4 hits in 10 CRISPR screens"/>
</dbReference>
<dbReference type="CD-CODE" id="E03F929F">
    <property type="entry name" value="Stress granule"/>
</dbReference>
<dbReference type="PRO" id="PR:P47176"/>
<dbReference type="Proteomes" id="UP000002311">
    <property type="component" value="Chromosome X"/>
</dbReference>
<dbReference type="RNAct" id="P47176">
    <property type="molecule type" value="protein"/>
</dbReference>
<dbReference type="GO" id="GO:0005737">
    <property type="term" value="C:cytoplasm"/>
    <property type="evidence" value="ECO:0000314"/>
    <property type="project" value="SGD"/>
</dbReference>
<dbReference type="GO" id="GO:0005739">
    <property type="term" value="C:mitochondrion"/>
    <property type="evidence" value="ECO:0000318"/>
    <property type="project" value="GO_Central"/>
</dbReference>
<dbReference type="GO" id="GO:0005634">
    <property type="term" value="C:nucleus"/>
    <property type="evidence" value="ECO:0007005"/>
    <property type="project" value="SGD"/>
</dbReference>
<dbReference type="GO" id="GO:0004084">
    <property type="term" value="F:branched-chain-amino-acid transaminase activity"/>
    <property type="evidence" value="ECO:0000314"/>
    <property type="project" value="SGD"/>
</dbReference>
<dbReference type="GO" id="GO:0052656">
    <property type="term" value="F:L-isoleucine-2-oxoglutarate transaminase activity"/>
    <property type="evidence" value="ECO:0007669"/>
    <property type="project" value="RHEA"/>
</dbReference>
<dbReference type="GO" id="GO:0052654">
    <property type="term" value="F:L-leucine-2-oxoglutarate transaminase activity"/>
    <property type="evidence" value="ECO:0007669"/>
    <property type="project" value="RHEA"/>
</dbReference>
<dbReference type="GO" id="GO:0052655">
    <property type="term" value="F:L-valine-2-oxoglutarate transaminase activity"/>
    <property type="evidence" value="ECO:0007669"/>
    <property type="project" value="RHEA"/>
</dbReference>
<dbReference type="GO" id="GO:0010326">
    <property type="term" value="F:methionine-oxo-acid transaminase activity"/>
    <property type="evidence" value="ECO:0007669"/>
    <property type="project" value="RHEA"/>
</dbReference>
<dbReference type="GO" id="GO:0009082">
    <property type="term" value="P:branched-chain amino acid biosynthetic process"/>
    <property type="evidence" value="ECO:0000314"/>
    <property type="project" value="SGD"/>
</dbReference>
<dbReference type="GO" id="GO:0009083">
    <property type="term" value="P:branched-chain amino acid catabolic process"/>
    <property type="evidence" value="ECO:0000315"/>
    <property type="project" value="SGD"/>
</dbReference>
<dbReference type="GO" id="GO:0009097">
    <property type="term" value="P:isoleucine biosynthetic process"/>
    <property type="evidence" value="ECO:0007669"/>
    <property type="project" value="UniProtKB-UniPathway"/>
</dbReference>
<dbReference type="GO" id="GO:0009098">
    <property type="term" value="P:L-leucine biosynthetic process"/>
    <property type="evidence" value="ECO:0000318"/>
    <property type="project" value="GO_Central"/>
</dbReference>
<dbReference type="GO" id="GO:0019509">
    <property type="term" value="P:L-methionine salvage from methylthioadenosine"/>
    <property type="evidence" value="ECO:0007669"/>
    <property type="project" value="UniProtKB-UniPathway"/>
</dbReference>
<dbReference type="GO" id="GO:0009099">
    <property type="term" value="P:L-valine biosynthetic process"/>
    <property type="evidence" value="ECO:0000318"/>
    <property type="project" value="GO_Central"/>
</dbReference>
<dbReference type="CDD" id="cd01557">
    <property type="entry name" value="BCAT_beta_family"/>
    <property type="match status" value="1"/>
</dbReference>
<dbReference type="FunFam" id="3.20.10.10:FF:000004">
    <property type="entry name" value="Branched-chain-amino-acid aminotransferase"/>
    <property type="match status" value="1"/>
</dbReference>
<dbReference type="FunFam" id="3.30.470.10:FF:000005">
    <property type="entry name" value="Branched-chain-amino-acid aminotransferase"/>
    <property type="match status" value="1"/>
</dbReference>
<dbReference type="Gene3D" id="3.30.470.10">
    <property type="match status" value="1"/>
</dbReference>
<dbReference type="Gene3D" id="3.20.10.10">
    <property type="entry name" value="D-amino Acid Aminotransferase, subunit A, domain 2"/>
    <property type="match status" value="1"/>
</dbReference>
<dbReference type="InterPro" id="IPR001544">
    <property type="entry name" value="Aminotrans_IV"/>
</dbReference>
<dbReference type="InterPro" id="IPR018300">
    <property type="entry name" value="Aminotrans_IV_CS"/>
</dbReference>
<dbReference type="InterPro" id="IPR036038">
    <property type="entry name" value="Aminotransferase-like"/>
</dbReference>
<dbReference type="InterPro" id="IPR005786">
    <property type="entry name" value="B_amino_transII"/>
</dbReference>
<dbReference type="InterPro" id="IPR043132">
    <property type="entry name" value="BCAT-like_C"/>
</dbReference>
<dbReference type="InterPro" id="IPR043131">
    <property type="entry name" value="BCAT-like_N"/>
</dbReference>
<dbReference type="InterPro" id="IPR033939">
    <property type="entry name" value="BCAT_family"/>
</dbReference>
<dbReference type="NCBIfam" id="TIGR01123">
    <property type="entry name" value="ilvE_II"/>
    <property type="match status" value="1"/>
</dbReference>
<dbReference type="NCBIfam" id="NF009897">
    <property type="entry name" value="PRK13357.1"/>
    <property type="match status" value="1"/>
</dbReference>
<dbReference type="PANTHER" id="PTHR11825:SF44">
    <property type="entry name" value="BRANCHED-CHAIN-AMINO-ACID AMINOTRANSFERASE"/>
    <property type="match status" value="1"/>
</dbReference>
<dbReference type="PANTHER" id="PTHR11825">
    <property type="entry name" value="SUBGROUP IIII AMINOTRANSFERASE"/>
    <property type="match status" value="1"/>
</dbReference>
<dbReference type="Pfam" id="PF01063">
    <property type="entry name" value="Aminotran_4"/>
    <property type="match status" value="1"/>
</dbReference>
<dbReference type="PIRSF" id="PIRSF006468">
    <property type="entry name" value="BCAT1"/>
    <property type="match status" value="1"/>
</dbReference>
<dbReference type="SUPFAM" id="SSF56752">
    <property type="entry name" value="D-aminoacid aminotransferase-like PLP-dependent enzymes"/>
    <property type="match status" value="1"/>
</dbReference>
<dbReference type="PROSITE" id="PS00770">
    <property type="entry name" value="AA_TRANSFER_CLASS_4"/>
    <property type="match status" value="1"/>
</dbReference>
<reference key="1">
    <citation type="journal article" date="1996" name="J. Biol. Chem.">
        <title>Mitochondrial and cytosolic branched-chain amino acid transaminases from yeast, homologs of the myc oncogene-regulated Eca39 protein.</title>
        <authorList>
            <person name="Kispal G."/>
            <person name="Steiner H."/>
            <person name="Court D.A."/>
            <person name="Rolinski B."/>
            <person name="Lill R."/>
        </authorList>
    </citation>
    <scope>NUCLEOTIDE SEQUENCE [MRNA]</scope>
    <scope>FUNCTION</scope>
    <scope>CATALYTIC ACTIVITY</scope>
    <scope>SUBCELLULAR LOCATION</scope>
</reference>
<reference key="2">
    <citation type="journal article" date="1996" name="EMBO J.">
        <title>Complete nucleotide sequence of Saccharomyces cerevisiae chromosome X.</title>
        <authorList>
            <person name="Galibert F."/>
            <person name="Alexandraki D."/>
            <person name="Baur A."/>
            <person name="Boles E."/>
            <person name="Chalwatzis N."/>
            <person name="Chuat J.-C."/>
            <person name="Coster F."/>
            <person name="Cziepluch C."/>
            <person name="de Haan M."/>
            <person name="Domdey H."/>
            <person name="Durand P."/>
            <person name="Entian K.-D."/>
            <person name="Gatius M."/>
            <person name="Goffeau A."/>
            <person name="Grivell L.A."/>
            <person name="Hennemann A."/>
            <person name="Herbert C.J."/>
            <person name="Heumann K."/>
            <person name="Hilger F."/>
            <person name="Hollenberg C.P."/>
            <person name="Huang M.-E."/>
            <person name="Jacq C."/>
            <person name="Jauniaux J.-C."/>
            <person name="Katsoulou C."/>
            <person name="Kirchrath L."/>
            <person name="Kleine K."/>
            <person name="Kordes E."/>
            <person name="Koetter P."/>
            <person name="Liebl S."/>
            <person name="Louis E.J."/>
            <person name="Manus V."/>
            <person name="Mewes H.-W."/>
            <person name="Miosga T."/>
            <person name="Obermaier B."/>
            <person name="Perea J."/>
            <person name="Pohl T.M."/>
            <person name="Portetelle D."/>
            <person name="Pujol A."/>
            <person name="Purnelle B."/>
            <person name="Ramezani Rad M."/>
            <person name="Rasmussen S.W."/>
            <person name="Rose M."/>
            <person name="Rossau R."/>
            <person name="Schaaff-Gerstenschlaeger I."/>
            <person name="Smits P.H.M."/>
            <person name="Scarcez T."/>
            <person name="Soriano N."/>
            <person name="To Van D."/>
            <person name="Tzermia M."/>
            <person name="Van Broekhoven A."/>
            <person name="Vandenbol M."/>
            <person name="Wedler H."/>
            <person name="von Wettstein D."/>
            <person name="Wambutt R."/>
            <person name="Zagulski M."/>
            <person name="Zollner A."/>
            <person name="Karpfinger-Hartl L."/>
        </authorList>
    </citation>
    <scope>NUCLEOTIDE SEQUENCE [LARGE SCALE GENOMIC DNA]</scope>
    <source>
        <strain>ATCC 204508 / S288c</strain>
    </source>
</reference>
<reference key="3">
    <citation type="journal article" date="2014" name="G3 (Bethesda)">
        <title>The reference genome sequence of Saccharomyces cerevisiae: Then and now.</title>
        <authorList>
            <person name="Engel S.R."/>
            <person name="Dietrich F.S."/>
            <person name="Fisk D.G."/>
            <person name="Binkley G."/>
            <person name="Balakrishnan R."/>
            <person name="Costanzo M.C."/>
            <person name="Dwight S.S."/>
            <person name="Hitz B.C."/>
            <person name="Karra K."/>
            <person name="Nash R.S."/>
            <person name="Weng S."/>
            <person name="Wong E.D."/>
            <person name="Lloyd P."/>
            <person name="Skrzypek M.S."/>
            <person name="Miyasato S.R."/>
            <person name="Simison M."/>
            <person name="Cherry J.M."/>
        </authorList>
    </citation>
    <scope>GENOME REANNOTATION</scope>
    <source>
        <strain>ATCC 204508 / S288c</strain>
    </source>
</reference>
<reference key="4">
    <citation type="journal article" date="1996" name="J. Biol. Chem.">
        <title>Two yeast homologs of ECA39, a target for c-Myc regulation, code for cytosolic and mitochondrial branched-chain amino acid aminotransferases.</title>
        <authorList>
            <person name="Eden A."/>
            <person name="Simchen G."/>
            <person name="Benvenisty N."/>
        </authorList>
    </citation>
    <scope>FUNCTION</scope>
    <scope>INDUCTION</scope>
</reference>
<reference key="5">
    <citation type="journal article" date="2003" name="Nature">
        <title>Global analysis of protein expression in yeast.</title>
        <authorList>
            <person name="Ghaemmaghami S."/>
            <person name="Huh W.-K."/>
            <person name="Bower K."/>
            <person name="Howson R.W."/>
            <person name="Belle A."/>
            <person name="Dephoure N."/>
            <person name="O'Shea E.K."/>
            <person name="Weissman J.S."/>
        </authorList>
    </citation>
    <scope>LEVEL OF PROTEIN EXPRESSION [LARGE SCALE ANALYSIS]</scope>
</reference>
<reference key="6">
    <citation type="journal article" date="2008" name="FEBS J.">
        <title>A complete inventory of all enzymes in the eukaryotic methionine salvage pathway.</title>
        <authorList>
            <person name="Pirkov I."/>
            <person name="Norbeck J."/>
            <person name="Gustafsson L."/>
            <person name="Albers E."/>
        </authorList>
    </citation>
    <scope>FUNCTION</scope>
</reference>
<reference key="7">
    <citation type="journal article" date="2011" name="PLoS ONE">
        <title>Saccharomyces cerevisiae Bat1 and Bat2 aminotransferases have functionally diverged from the ancestral-like Kluyveromyces lactis orthologous enzyme.</title>
        <authorList>
            <person name="Colon M."/>
            <person name="Hernandez F."/>
            <person name="Lopez K."/>
            <person name="Quezada H."/>
            <person name="Gonzalez J."/>
            <person name="Lopez G."/>
            <person name="Aranda C."/>
            <person name="Gonzalez A."/>
        </authorList>
    </citation>
    <scope>FUNCTION</scope>
    <scope>SUBCELLULAR LOCATION</scope>
    <scope>INDUCTION</scope>
</reference>
<reference key="8">
    <citation type="journal article" date="2017" name="Genetics">
        <title>Diversification of transcriptional regulation determines subfunctionalization of paralogous branched chain aminotransferases in the yeast Saccharomyces cerevisiae.</title>
        <authorList>
            <person name="Gonzalez J."/>
            <person name="Lopez G."/>
            <person name="Argueta S."/>
            <person name="Escalera-Fanjul X."/>
            <person name="El Hafidi M."/>
            <person name="Campero-Basaldua C."/>
            <person name="Strauss J."/>
            <person name="Riego-Ruiz L."/>
            <person name="Gonzalez A."/>
        </authorList>
    </citation>
    <scope>INDUCTION</scope>
</reference>
<reference key="9">
    <citation type="journal article" date="2017" name="Metab. Eng.">
        <title>Uncovering the role of branched-chain amino acid transaminases in Saccharomyces cerevisiae isobutanol biosynthesis.</title>
        <authorList>
            <person name="Hammer S.K."/>
            <person name="Avalos J.L."/>
        </authorList>
    </citation>
    <scope>BIOTECHNOLOGY</scope>
</reference>
<reference key="10">
    <citation type="journal article" date="2020" name="Metab. Eng.">
        <authorList>
            <person name="Hammer S.K."/>
            <person name="Avalos J.L."/>
        </authorList>
    </citation>
    <scope>ERRATUM OF PUBMED:29037781</scope>
</reference>
<comment type="function">
    <text evidence="3 4 6 7 15">Cytoplasmic isozyme of branched-chain-amino-acid aminotransferase, which catalyzes the first reaction in the catabolism of the essential branched chain amino acids (BCAAs) leucine, isoleucine, and valine (PubMed:21267457, PubMed:8702755, PubMed:8798704). Catalyzes the formation of methionine from 2-keto-4-methylthiobutyrate (KMTB) in the methionine salvage pathway primarily using BCAAs (leucine, isoleucine, and valine) as well as lysine and proline as the amino donors (PubMed:18625006). Involved in cell cycle regulation (Probable).</text>
</comment>
<comment type="catalytic activity">
    <reaction evidence="15">
        <text>L-leucine + 2-oxoglutarate = 4-methyl-2-oxopentanoate + L-glutamate</text>
        <dbReference type="Rhea" id="RHEA:18321"/>
        <dbReference type="ChEBI" id="CHEBI:16810"/>
        <dbReference type="ChEBI" id="CHEBI:17865"/>
        <dbReference type="ChEBI" id="CHEBI:29985"/>
        <dbReference type="ChEBI" id="CHEBI:57427"/>
        <dbReference type="EC" id="2.6.1.42"/>
    </reaction>
    <physiologicalReaction direction="left-to-right" evidence="15">
        <dbReference type="Rhea" id="RHEA:18322"/>
    </physiologicalReaction>
</comment>
<comment type="catalytic activity">
    <reaction evidence="15">
        <text>L-isoleucine + 2-oxoglutarate = (S)-3-methyl-2-oxopentanoate + L-glutamate</text>
        <dbReference type="Rhea" id="RHEA:24801"/>
        <dbReference type="ChEBI" id="CHEBI:16810"/>
        <dbReference type="ChEBI" id="CHEBI:29985"/>
        <dbReference type="ChEBI" id="CHEBI:35146"/>
        <dbReference type="ChEBI" id="CHEBI:58045"/>
        <dbReference type="EC" id="2.6.1.42"/>
    </reaction>
    <physiologicalReaction direction="left-to-right" evidence="15">
        <dbReference type="Rhea" id="RHEA:24802"/>
    </physiologicalReaction>
</comment>
<comment type="catalytic activity">
    <reaction evidence="15">
        <text>L-valine + 2-oxoglutarate = 3-methyl-2-oxobutanoate + L-glutamate</text>
        <dbReference type="Rhea" id="RHEA:24813"/>
        <dbReference type="ChEBI" id="CHEBI:11851"/>
        <dbReference type="ChEBI" id="CHEBI:16810"/>
        <dbReference type="ChEBI" id="CHEBI:29985"/>
        <dbReference type="ChEBI" id="CHEBI:57762"/>
        <dbReference type="EC" id="2.6.1.42"/>
    </reaction>
    <physiologicalReaction direction="left-to-right" evidence="15">
        <dbReference type="Rhea" id="RHEA:24814"/>
    </physiologicalReaction>
</comment>
<comment type="catalytic activity">
    <reaction evidence="11">
        <text>a 2-oxocarboxylate + L-methionine = 4-methylsulfanyl-2-oxobutanoate + an L-alpha-amino acid</text>
        <dbReference type="Rhea" id="RHEA:31763"/>
        <dbReference type="ChEBI" id="CHEBI:16723"/>
        <dbReference type="ChEBI" id="CHEBI:35179"/>
        <dbReference type="ChEBI" id="CHEBI:57844"/>
        <dbReference type="ChEBI" id="CHEBI:59869"/>
    </reaction>
    <physiologicalReaction direction="right-to-left" evidence="11">
        <dbReference type="Rhea" id="RHEA:31765"/>
    </physiologicalReaction>
</comment>
<comment type="cofactor">
    <cofactor>
        <name>pyridoxal 5'-phosphate</name>
        <dbReference type="ChEBI" id="CHEBI:597326"/>
    </cofactor>
</comment>
<comment type="pathway">
    <text evidence="12 14 15">Amino-acid biosynthesis; L-isoleucine biosynthesis; L-isoleucine from 2-oxobutanoate: step 4/4.</text>
</comment>
<comment type="pathway">
    <text evidence="12 14 15">Amino-acid biosynthesis; L-leucine biosynthesis; L-leucine from 3-methyl-2-oxobutanoate: step 4/4.</text>
</comment>
<comment type="pathway">
    <text evidence="12 14 15">Amino-acid biosynthesis; L-valine biosynthesis; L-valine from pyruvate: step 4/4.</text>
</comment>
<comment type="pathway">
    <text evidence="11">Amino-acid biosynthesis; L-methionine biosynthesis via salvage pathway; L-methionine from S-methyl-5-thio-alpha-D-ribose 1-phosphate: step 6/6.</text>
</comment>
<comment type="interaction">
    <interactant intactId="EBI-3462">
        <id>P47176</id>
    </interactant>
    <interactant intactId="EBI-3455">
        <id>P38891</id>
        <label>BAT1</label>
    </interactant>
    <organismsDiffer>false</organismsDiffer>
    <experiments>4</experiments>
</comment>
<comment type="subcellular location">
    <subcellularLocation>
        <location evidence="4 7">Cytoplasm</location>
    </subcellularLocation>
</comment>
<comment type="induction">
    <text evidence="4 5 6">Highly expressed during stationary phase, down-regulated during logarithmic phase of growth (PubMed:8702755). Down-regulated in the presence of repressive nitrogen sources (glutamine) and derepressed in secondary non-repressive nitrogen sources such as GABA. Highly expressed on cultures with isoleucine, leucine and valine as sole nitrogen source (catabolic conditions) (PubMed:21267457, PubMed:28912343).</text>
</comment>
<comment type="biotechnology">
    <text evidence="13">Isobutanol and other branched-chain higher alcohols (BCHAs) are promising advanced biofuels derived from the degradation of branched-chain amino acids (BCAAs). Degradation of BCAAs begins with transamination reactions, catalyzed by branched-chain amino acid transaminases (BCATs).</text>
</comment>
<comment type="miscellaneous">
    <text evidence="2">Present with 25900 molecules/cell in log phase SD medium.</text>
</comment>
<comment type="similarity">
    <text evidence="10">Belongs to the class-IV pyridoxal-phosphate-dependent aminotransferase family.</text>
</comment>
<comment type="sequence caution" evidence="10">
    <conflict type="erroneous initiation">
        <sequence resource="EMBL-CDS" id="CAA60376"/>
    </conflict>
    <text>Extended N-terminus.</text>
</comment>
<comment type="sequence caution" evidence="10">
    <conflict type="frameshift">
        <sequence resource="EMBL-CDS" id="CAA60376"/>
    </conflict>
</comment>
<gene>
    <name evidence="9" type="primary">BAT2</name>
    <name evidence="8" type="synonym">ECA40</name>
    <name type="synonym">TWT2</name>
    <name type="ordered locus">YJR148W</name>
    <name type="ORF">J2209</name>
</gene>
<proteinExistence type="evidence at protein level"/>
<protein>
    <recommendedName>
        <fullName>Branched-chain-amino-acid aminotransferase, cytosolic</fullName>
        <shortName>BCAT</shortName>
        <ecNumber evidence="15">2.6.1.42</ecNumber>
    </recommendedName>
    <alternativeName>
        <fullName>Protein TWT2</fullName>
    </alternativeName>
</protein>
<sequence length="376" mass="41625">MTLAPLDASKVKITTTQHASKPKPNSELVFGKSFTDHMLTAEWTAEKGWGTPEIKPYQNLSLDPSAVVFHYAFELFEGMKAYRTVDNKITMFRPDMNMKRMNKSAQRICLPTFDPEELITLIGKLIQQDKCLVPEGKGYSLYIRPTLIGTTAGLGVSTPDRALLYVICCPVGPYYKTGFKAVRLEATDYATRAWPGGCGDKKLGANYAPCVLPQLQAASRGYQQNLWLFGPNNNITEVGTMNAFFVFKDSKTGKKELVTAPLDGTILEGVTRDSILNLAKERLEPSEWTISERYFTIGEVTERSKNGELLEAFGSGTAAIVSPIKEIGWKGEQINIPLLPGEQTGPLAKEVAQWINGIQYGETEHGNWSRVVTDLN</sequence>
<evidence type="ECO:0000250" key="1">
    <source>
        <dbReference type="UniProtKB" id="P0AB80"/>
    </source>
</evidence>
<evidence type="ECO:0000269" key="2">
    <source>
    </source>
</evidence>
<evidence type="ECO:0000269" key="3">
    <source>
    </source>
</evidence>
<evidence type="ECO:0000269" key="4">
    <source>
    </source>
</evidence>
<evidence type="ECO:0000269" key="5">
    <source>
    </source>
</evidence>
<evidence type="ECO:0000269" key="6">
    <source>
    </source>
</evidence>
<evidence type="ECO:0000269" key="7">
    <source>
    </source>
</evidence>
<evidence type="ECO:0000303" key="8">
    <source>
    </source>
</evidence>
<evidence type="ECO:0000303" key="9">
    <source>
    </source>
</evidence>
<evidence type="ECO:0000305" key="10"/>
<evidence type="ECO:0000305" key="11">
    <source>
    </source>
</evidence>
<evidence type="ECO:0000305" key="12">
    <source>
    </source>
</evidence>
<evidence type="ECO:0000305" key="13">
    <source>
    </source>
</evidence>
<evidence type="ECO:0000305" key="14">
    <source>
    </source>
</evidence>
<evidence type="ECO:0000305" key="15">
    <source>
    </source>
</evidence>
<organism>
    <name type="scientific">Saccharomyces cerevisiae (strain ATCC 204508 / S288c)</name>
    <name type="common">Baker's yeast</name>
    <dbReference type="NCBI Taxonomy" id="559292"/>
    <lineage>
        <taxon>Eukaryota</taxon>
        <taxon>Fungi</taxon>
        <taxon>Dikarya</taxon>
        <taxon>Ascomycota</taxon>
        <taxon>Saccharomycotina</taxon>
        <taxon>Saccharomycetes</taxon>
        <taxon>Saccharomycetales</taxon>
        <taxon>Saccharomycetaceae</taxon>
        <taxon>Saccharomyces</taxon>
    </lineage>
</organism>
<name>BCA2_YEAST</name>
<keyword id="KW-0028">Amino-acid biosynthesis</keyword>
<keyword id="KW-0032">Aminotransferase</keyword>
<keyword id="KW-0100">Branched-chain amino acid biosynthesis</keyword>
<keyword id="KW-0963">Cytoplasm</keyword>
<keyword id="KW-0663">Pyridoxal phosphate</keyword>
<keyword id="KW-1185">Reference proteome</keyword>
<keyword id="KW-0808">Transferase</keyword>
<feature type="chain" id="PRO_0000103302" description="Branched-chain-amino-acid aminotransferase, cytosolic">
    <location>
        <begin position="1"/>
        <end position="376"/>
    </location>
</feature>
<feature type="modified residue" description="N6-(pyridoxal phosphate)lysine" evidence="1">
    <location>
        <position position="202"/>
    </location>
</feature>
<feature type="sequence conflict" description="In Ref. 1; CAA60376." evidence="10" ref="1">
    <original>IG</original>
    <variation>MA</variation>
    <location>
        <begin position="148"/>
        <end position="149"/>
    </location>
</feature>
<feature type="sequence conflict" description="In Ref. 1; CAA60376." evidence="10" ref="1">
    <original>WP</original>
    <variation>CA</variation>
    <location>
        <begin position="194"/>
        <end position="195"/>
    </location>
</feature>
<feature type="sequence conflict" description="In Ref. 1; CAA60376." evidence="10" ref="1">
    <original>Q</original>
    <variation>E</variation>
    <location>
        <position position="224"/>
    </location>
</feature>
<feature type="sequence conflict" description="In Ref. 1; CAA60376." evidence="10" ref="1">
    <original>F</original>
    <variation>K</variation>
    <location>
        <position position="313"/>
    </location>
</feature>